<comment type="cofactor">
    <cofactor evidence="1">
        <name>Zn(2+)</name>
        <dbReference type="ChEBI" id="CHEBI:29105"/>
    </cofactor>
    <text evidence="1">Binds 1 zinc ion per subunit.</text>
</comment>
<comment type="subcellular location">
    <subcellularLocation>
        <location evidence="1">Cell inner membrane</location>
        <topology evidence="1">Multi-pass membrane protein</topology>
    </subcellularLocation>
</comment>
<comment type="similarity">
    <text evidence="1">Belongs to the peptidase M48B family.</text>
</comment>
<dbReference type="EC" id="3.4.24.-" evidence="1"/>
<dbReference type="EMBL" id="CP001091">
    <property type="protein sequence ID" value="ACE61747.1"/>
    <property type="molecule type" value="Genomic_DNA"/>
</dbReference>
<dbReference type="RefSeq" id="WP_005604779.1">
    <property type="nucleotide sequence ID" value="NC_010939.1"/>
</dbReference>
<dbReference type="SMR" id="B3H1S0"/>
<dbReference type="MEROPS" id="M48.002"/>
<dbReference type="GeneID" id="48599266"/>
<dbReference type="KEGG" id="apa:APP7_1095"/>
<dbReference type="HOGENOM" id="CLU_042266_1_0_6"/>
<dbReference type="Proteomes" id="UP000001226">
    <property type="component" value="Chromosome"/>
</dbReference>
<dbReference type="GO" id="GO:0005886">
    <property type="term" value="C:plasma membrane"/>
    <property type="evidence" value="ECO:0007669"/>
    <property type="project" value="UniProtKB-SubCell"/>
</dbReference>
<dbReference type="GO" id="GO:0004222">
    <property type="term" value="F:metalloendopeptidase activity"/>
    <property type="evidence" value="ECO:0007669"/>
    <property type="project" value="UniProtKB-UniRule"/>
</dbReference>
<dbReference type="GO" id="GO:0008270">
    <property type="term" value="F:zinc ion binding"/>
    <property type="evidence" value="ECO:0007669"/>
    <property type="project" value="UniProtKB-UniRule"/>
</dbReference>
<dbReference type="GO" id="GO:0006508">
    <property type="term" value="P:proteolysis"/>
    <property type="evidence" value="ECO:0007669"/>
    <property type="project" value="UniProtKB-KW"/>
</dbReference>
<dbReference type="CDD" id="cd07335">
    <property type="entry name" value="M48B_HtpX_like"/>
    <property type="match status" value="1"/>
</dbReference>
<dbReference type="FunFam" id="3.30.2010.10:FF:000001">
    <property type="entry name" value="Protease HtpX"/>
    <property type="match status" value="1"/>
</dbReference>
<dbReference type="Gene3D" id="3.30.2010.10">
    <property type="entry name" value="Metalloproteases ('zincins'), catalytic domain"/>
    <property type="match status" value="1"/>
</dbReference>
<dbReference type="HAMAP" id="MF_00188">
    <property type="entry name" value="Pept_M48_protease_HtpX"/>
    <property type="match status" value="1"/>
</dbReference>
<dbReference type="InterPro" id="IPR050083">
    <property type="entry name" value="HtpX_protease"/>
</dbReference>
<dbReference type="InterPro" id="IPR022919">
    <property type="entry name" value="Pept_M48_protease_HtpX"/>
</dbReference>
<dbReference type="InterPro" id="IPR001915">
    <property type="entry name" value="Peptidase_M48"/>
</dbReference>
<dbReference type="NCBIfam" id="NF003965">
    <property type="entry name" value="PRK05457.1"/>
    <property type="match status" value="1"/>
</dbReference>
<dbReference type="PANTHER" id="PTHR43221">
    <property type="entry name" value="PROTEASE HTPX"/>
    <property type="match status" value="1"/>
</dbReference>
<dbReference type="PANTHER" id="PTHR43221:SF1">
    <property type="entry name" value="PROTEASE HTPX"/>
    <property type="match status" value="1"/>
</dbReference>
<dbReference type="Pfam" id="PF01435">
    <property type="entry name" value="Peptidase_M48"/>
    <property type="match status" value="1"/>
</dbReference>
<name>HTPX_ACTP7</name>
<accession>B3H1S0</accession>
<gene>
    <name evidence="1" type="primary">htpX</name>
    <name type="ordered locus">APP7_1095</name>
</gene>
<keyword id="KW-0997">Cell inner membrane</keyword>
<keyword id="KW-1003">Cell membrane</keyword>
<keyword id="KW-0378">Hydrolase</keyword>
<keyword id="KW-0472">Membrane</keyword>
<keyword id="KW-0479">Metal-binding</keyword>
<keyword id="KW-0482">Metalloprotease</keyword>
<keyword id="KW-0645">Protease</keyword>
<keyword id="KW-0812">Transmembrane</keyword>
<keyword id="KW-1133">Transmembrane helix</keyword>
<keyword id="KW-0862">Zinc</keyword>
<protein>
    <recommendedName>
        <fullName evidence="1">Protease HtpX</fullName>
        <ecNumber evidence="1">3.4.24.-</ecNumber>
    </recommendedName>
    <alternativeName>
        <fullName evidence="1">Heat shock protein HtpX</fullName>
    </alternativeName>
</protein>
<feature type="chain" id="PRO_1000098802" description="Protease HtpX">
    <location>
        <begin position="1"/>
        <end position="289"/>
    </location>
</feature>
<feature type="transmembrane region" description="Helical" evidence="1">
    <location>
        <begin position="7"/>
        <end position="27"/>
    </location>
</feature>
<feature type="transmembrane region" description="Helical" evidence="1">
    <location>
        <begin position="38"/>
        <end position="58"/>
    </location>
</feature>
<feature type="transmembrane region" description="Helical" evidence="1">
    <location>
        <begin position="155"/>
        <end position="175"/>
    </location>
</feature>
<feature type="transmembrane region" description="Helical" evidence="1">
    <location>
        <begin position="194"/>
        <end position="214"/>
    </location>
</feature>
<feature type="active site" evidence="1">
    <location>
        <position position="145"/>
    </location>
</feature>
<feature type="binding site" evidence="1">
    <location>
        <position position="144"/>
    </location>
    <ligand>
        <name>Zn(2+)</name>
        <dbReference type="ChEBI" id="CHEBI:29105"/>
        <note>catalytic</note>
    </ligand>
</feature>
<feature type="binding site" evidence="1">
    <location>
        <position position="148"/>
    </location>
    <ligand>
        <name>Zn(2+)</name>
        <dbReference type="ChEBI" id="CHEBI:29105"/>
        <note>catalytic</note>
    </ligand>
</feature>
<feature type="binding site" evidence="1">
    <location>
        <position position="223"/>
    </location>
    <ligand>
        <name>Zn(2+)</name>
        <dbReference type="ChEBI" id="CHEBI:29105"/>
        <note>catalytic</note>
    </ligand>
</feature>
<proteinExistence type="inferred from homology"/>
<reference key="1">
    <citation type="submission" date="2008-06" db="EMBL/GenBank/DDBJ databases">
        <title>Genome and proteome analysis of A. pleuropneumoniae serotype 7.</title>
        <authorList>
            <person name="Linke B."/>
            <person name="Buettner F."/>
            <person name="Martinez-Arias R."/>
            <person name="Goesmann A."/>
            <person name="Baltes N."/>
            <person name="Tegetmeyer H."/>
            <person name="Singh M."/>
            <person name="Gerlach G.F."/>
        </authorList>
    </citation>
    <scope>NUCLEOTIDE SEQUENCE [LARGE SCALE GENOMIC DNA]</scope>
    <source>
        <strain>AP76</strain>
    </source>
</reference>
<evidence type="ECO:0000255" key="1">
    <source>
        <dbReference type="HAMAP-Rule" id="MF_00188"/>
    </source>
</evidence>
<organism>
    <name type="scientific">Actinobacillus pleuropneumoniae serotype 7 (strain AP76)</name>
    <dbReference type="NCBI Taxonomy" id="537457"/>
    <lineage>
        <taxon>Bacteria</taxon>
        <taxon>Pseudomonadati</taxon>
        <taxon>Pseudomonadota</taxon>
        <taxon>Gammaproteobacteria</taxon>
        <taxon>Pasteurellales</taxon>
        <taxon>Pasteurellaceae</taxon>
        <taxon>Actinobacillus</taxon>
    </lineage>
</organism>
<sequence length="289" mass="31555">MAKRIVLFLLTNLAITFVLGIVLNIIFQVTGIQGGSTGGILVMSLVFGFAGSLISLFMSKSMALRSVGAEVIQQPRNHAEQWLFDTVQRQSQQANIPMPDIAIYHSADVNAFATGATKNNSLVAVSTGLLDNMTEDEAEAVVAHEIAHIANGDMVTMTLLQGVLNTFVIFLSRIISTAASSGKDENGNATQNTLVFWIVDIALQMIFGVIATMIAMWFSRYREYRADAGSAQLVGKEKMIAALQRLQHVHEPQEMQGSLAAFMINGARSKELFMSHPPLEKRIEALRNL</sequence>